<gene>
    <name type="primary">NIP3-1</name>
    <name type="ordered locus">At1g31885</name>
    <name type="ORF">F5M6.28</name>
</gene>
<keyword id="KW-0007">Acetylation</keyword>
<keyword id="KW-0472">Membrane</keyword>
<keyword id="KW-1185">Reference proteome</keyword>
<keyword id="KW-0677">Repeat</keyword>
<keyword id="KW-0812">Transmembrane</keyword>
<keyword id="KW-1133">Transmembrane helix</keyword>
<keyword id="KW-0813">Transport</keyword>
<evidence type="ECO:0000250" key="1"/>
<evidence type="ECO:0000250" key="2">
    <source>
        <dbReference type="UniProtKB" id="P61837"/>
    </source>
</evidence>
<evidence type="ECO:0000255" key="3"/>
<evidence type="ECO:0000305" key="4"/>
<name>NIP31_ARATH</name>
<comment type="function">
    <text evidence="1">Aquaporins facilitate the transport of water and small neutral solutes across cell membranes.</text>
</comment>
<comment type="subcellular location">
    <subcellularLocation>
        <location evidence="4">Membrane</location>
        <topology evidence="4">Multi-pass membrane protein</topology>
    </subcellularLocation>
</comment>
<comment type="domain">
    <text>Aquaporins contain two tandem repeats each containing three membrane-spanning domains and a pore-forming loop with the signature motif Asn-Pro-Ala (NPA).</text>
</comment>
<comment type="similarity">
    <text evidence="4">Belongs to the MIP/aquaporin (TC 1.A.8) family. NIP (TC 1.A.8.12) subfamily.</text>
</comment>
<comment type="sequence caution" evidence="4">
    <conflict type="erroneous gene model prediction">
        <sequence resource="EMBL-CDS" id="AAG50717"/>
    </conflict>
</comment>
<organism>
    <name type="scientific">Arabidopsis thaliana</name>
    <name type="common">Mouse-ear cress</name>
    <dbReference type="NCBI Taxonomy" id="3702"/>
    <lineage>
        <taxon>Eukaryota</taxon>
        <taxon>Viridiplantae</taxon>
        <taxon>Streptophyta</taxon>
        <taxon>Embryophyta</taxon>
        <taxon>Tracheophyta</taxon>
        <taxon>Spermatophyta</taxon>
        <taxon>Magnoliopsida</taxon>
        <taxon>eudicotyledons</taxon>
        <taxon>Gunneridae</taxon>
        <taxon>Pentapetalae</taxon>
        <taxon>rosids</taxon>
        <taxon>malvids</taxon>
        <taxon>Brassicales</taxon>
        <taxon>Brassicaceae</taxon>
        <taxon>Camelineae</taxon>
        <taxon>Arabidopsis</taxon>
    </lineage>
</organism>
<sequence length="323" mass="34579">MAEISDITTQTQTVVLDIENYQSIDDSRSSDLSAPLVSVSFVQKLIGEFVGTFTMIFAGCSAIVVNETYGKPVTLPGIALVWGLVVTVMIYSIGHVSGAHFNPAVSIAFASSKKFPFNQVPGYIAAQLLGSTLAAAVLRLVFHLDDDVCSLKGDVYVGTYPSNSNTTSFVMEFIATFNLMFVISAVATDKRATGSFAGIAIGATIVLDILFSGPISGASMNPARSLGPALIWGCYKDLWLYIVSPVIGALSGAWTYGLLRSTKKSYSEIIRPNCNKVSSRDRQEASQDEICVLRVVDPANQNYFICSSPTDINGKCNVTCKLA</sequence>
<protein>
    <recommendedName>
        <fullName>Aquaporin NIP3-1</fullName>
    </recommendedName>
    <alternativeName>
        <fullName>NOD26-like intrinsic protein 3-1</fullName>
        <shortName>AtNIP3;1</shortName>
    </alternativeName>
</protein>
<reference key="1">
    <citation type="journal article" date="2000" name="Nature">
        <title>Sequence and analysis of chromosome 1 of the plant Arabidopsis thaliana.</title>
        <authorList>
            <person name="Theologis A."/>
            <person name="Ecker J.R."/>
            <person name="Palm C.J."/>
            <person name="Federspiel N.A."/>
            <person name="Kaul S."/>
            <person name="White O."/>
            <person name="Alonso J."/>
            <person name="Altafi H."/>
            <person name="Araujo R."/>
            <person name="Bowman C.L."/>
            <person name="Brooks S.Y."/>
            <person name="Buehler E."/>
            <person name="Chan A."/>
            <person name="Chao Q."/>
            <person name="Chen H."/>
            <person name="Cheuk R.F."/>
            <person name="Chin C.W."/>
            <person name="Chung M.K."/>
            <person name="Conn L."/>
            <person name="Conway A.B."/>
            <person name="Conway A.R."/>
            <person name="Creasy T.H."/>
            <person name="Dewar K."/>
            <person name="Dunn P."/>
            <person name="Etgu P."/>
            <person name="Feldblyum T.V."/>
            <person name="Feng J.-D."/>
            <person name="Fong B."/>
            <person name="Fujii C.Y."/>
            <person name="Gill J.E."/>
            <person name="Goldsmith A.D."/>
            <person name="Haas B."/>
            <person name="Hansen N.F."/>
            <person name="Hughes B."/>
            <person name="Huizar L."/>
            <person name="Hunter J.L."/>
            <person name="Jenkins J."/>
            <person name="Johnson-Hopson C."/>
            <person name="Khan S."/>
            <person name="Khaykin E."/>
            <person name="Kim C.J."/>
            <person name="Koo H.L."/>
            <person name="Kremenetskaia I."/>
            <person name="Kurtz D.B."/>
            <person name="Kwan A."/>
            <person name="Lam B."/>
            <person name="Langin-Hooper S."/>
            <person name="Lee A."/>
            <person name="Lee J.M."/>
            <person name="Lenz C.A."/>
            <person name="Li J.H."/>
            <person name="Li Y.-P."/>
            <person name="Lin X."/>
            <person name="Liu S.X."/>
            <person name="Liu Z.A."/>
            <person name="Luros J.S."/>
            <person name="Maiti R."/>
            <person name="Marziali A."/>
            <person name="Militscher J."/>
            <person name="Miranda M."/>
            <person name="Nguyen M."/>
            <person name="Nierman W.C."/>
            <person name="Osborne B.I."/>
            <person name="Pai G."/>
            <person name="Peterson J."/>
            <person name="Pham P.K."/>
            <person name="Rizzo M."/>
            <person name="Rooney T."/>
            <person name="Rowley D."/>
            <person name="Sakano H."/>
            <person name="Salzberg S.L."/>
            <person name="Schwartz J.R."/>
            <person name="Shinn P."/>
            <person name="Southwick A.M."/>
            <person name="Sun H."/>
            <person name="Tallon L.J."/>
            <person name="Tambunga G."/>
            <person name="Toriumi M.J."/>
            <person name="Town C.D."/>
            <person name="Utterback T."/>
            <person name="Van Aken S."/>
            <person name="Vaysberg M."/>
            <person name="Vysotskaia V.S."/>
            <person name="Walker M."/>
            <person name="Wu D."/>
            <person name="Yu G."/>
            <person name="Fraser C.M."/>
            <person name="Venter J.C."/>
            <person name="Davis R.W."/>
        </authorList>
    </citation>
    <scope>NUCLEOTIDE SEQUENCE [LARGE SCALE GENOMIC DNA]</scope>
    <source>
        <strain>cv. Columbia</strain>
    </source>
</reference>
<reference key="2">
    <citation type="journal article" date="2017" name="Plant J.">
        <title>Araport11: a complete reannotation of the Arabidopsis thaliana reference genome.</title>
        <authorList>
            <person name="Cheng C.Y."/>
            <person name="Krishnakumar V."/>
            <person name="Chan A.P."/>
            <person name="Thibaud-Nissen F."/>
            <person name="Schobel S."/>
            <person name="Town C.D."/>
        </authorList>
    </citation>
    <scope>GENOME REANNOTATION</scope>
    <source>
        <strain>cv. Columbia</strain>
    </source>
</reference>
<reference key="3">
    <citation type="journal article" date="2002" name="Genome Biol.">
        <title>From genome to function: the Arabidopsis aquaporins.</title>
        <authorList>
            <person name="Quigley F."/>
            <person name="Rosenberg J.M."/>
            <person name="Shachar-Hill Y."/>
            <person name="Bohnert H.J."/>
        </authorList>
    </citation>
    <scope>NOMENCLATURE</scope>
</reference>
<proteinExistence type="evidence at transcript level"/>
<dbReference type="EMBL" id="AC079041">
    <property type="protein sequence ID" value="AAG50717.1"/>
    <property type="status" value="ALT_SEQ"/>
    <property type="molecule type" value="Genomic_DNA"/>
</dbReference>
<dbReference type="EMBL" id="CP002684">
    <property type="protein sequence ID" value="AEE31413.1"/>
    <property type="molecule type" value="Genomic_DNA"/>
</dbReference>
<dbReference type="PIR" id="B86443">
    <property type="entry name" value="B86443"/>
</dbReference>
<dbReference type="RefSeq" id="NP_001323362.1">
    <property type="nucleotide sequence ID" value="NM_001332986.1"/>
</dbReference>
<dbReference type="RefSeq" id="NP_174472.2">
    <property type="nucleotide sequence ID" value="NM_102926.3"/>
</dbReference>
<dbReference type="SMR" id="Q9C6T0"/>
<dbReference type="FunCoup" id="Q9C6T0">
    <property type="interactions" value="36"/>
</dbReference>
<dbReference type="STRING" id="3702.Q9C6T0"/>
<dbReference type="PaxDb" id="3702-AT1G31885.1"/>
<dbReference type="EnsemblPlants" id="AT1G31885.1">
    <property type="protein sequence ID" value="AT1G31885.1"/>
    <property type="gene ID" value="AT1G31885"/>
</dbReference>
<dbReference type="GeneID" id="840079"/>
<dbReference type="Gramene" id="AT1G31885.1">
    <property type="protein sequence ID" value="AT1G31885.1"/>
    <property type="gene ID" value="AT1G31885"/>
</dbReference>
<dbReference type="KEGG" id="ath:AT1G31885"/>
<dbReference type="Araport" id="AT1G31885"/>
<dbReference type="TAIR" id="AT1G31885">
    <property type="gene designation" value="NIP3"/>
</dbReference>
<dbReference type="eggNOG" id="KOG0223">
    <property type="taxonomic scope" value="Eukaryota"/>
</dbReference>
<dbReference type="HOGENOM" id="CLU_020019_3_1_1"/>
<dbReference type="InParanoid" id="Q9C6T0"/>
<dbReference type="OMA" id="HNIFFEC"/>
<dbReference type="PhylomeDB" id="Q9C6T0"/>
<dbReference type="PRO" id="PR:Q9C6T0"/>
<dbReference type="Proteomes" id="UP000006548">
    <property type="component" value="Chromosome 1"/>
</dbReference>
<dbReference type="ExpressionAtlas" id="Q9C6T0">
    <property type="expression patterns" value="baseline and differential"/>
</dbReference>
<dbReference type="GO" id="GO:0016020">
    <property type="term" value="C:membrane"/>
    <property type="evidence" value="ECO:0007669"/>
    <property type="project" value="UniProtKB-SubCell"/>
</dbReference>
<dbReference type="GO" id="GO:0015267">
    <property type="term" value="F:channel activity"/>
    <property type="evidence" value="ECO:0007669"/>
    <property type="project" value="InterPro"/>
</dbReference>
<dbReference type="CDD" id="cd00333">
    <property type="entry name" value="MIP"/>
    <property type="match status" value="1"/>
</dbReference>
<dbReference type="Gene3D" id="1.20.1080.10">
    <property type="entry name" value="Glycerol uptake facilitator protein"/>
    <property type="match status" value="1"/>
</dbReference>
<dbReference type="InterPro" id="IPR023271">
    <property type="entry name" value="Aquaporin-like"/>
</dbReference>
<dbReference type="InterPro" id="IPR034294">
    <property type="entry name" value="Aquaporin_transptr"/>
</dbReference>
<dbReference type="InterPro" id="IPR000425">
    <property type="entry name" value="MIP"/>
</dbReference>
<dbReference type="InterPro" id="IPR022357">
    <property type="entry name" value="MIP_CS"/>
</dbReference>
<dbReference type="NCBIfam" id="TIGR00861">
    <property type="entry name" value="MIP"/>
    <property type="match status" value="1"/>
</dbReference>
<dbReference type="PANTHER" id="PTHR45724">
    <property type="entry name" value="AQUAPORIN NIP2-1"/>
    <property type="match status" value="1"/>
</dbReference>
<dbReference type="PANTHER" id="PTHR45724:SF12">
    <property type="entry name" value="AQUAPORIN NIP3-1"/>
    <property type="match status" value="1"/>
</dbReference>
<dbReference type="Pfam" id="PF00230">
    <property type="entry name" value="MIP"/>
    <property type="match status" value="1"/>
</dbReference>
<dbReference type="PRINTS" id="PR00783">
    <property type="entry name" value="MINTRINSICP"/>
</dbReference>
<dbReference type="SUPFAM" id="SSF81338">
    <property type="entry name" value="Aquaporin-like"/>
    <property type="match status" value="1"/>
</dbReference>
<dbReference type="PROSITE" id="PS00221">
    <property type="entry name" value="MIP"/>
    <property type="match status" value="1"/>
</dbReference>
<accession>Q9C6T0</accession>
<feature type="chain" id="PRO_0000064065" description="Aquaporin NIP3-1">
    <location>
        <begin position="1"/>
        <end position="323"/>
    </location>
</feature>
<feature type="transmembrane region" description="Helical; Name=1" evidence="3">
    <location>
        <begin position="45"/>
        <end position="65"/>
    </location>
</feature>
<feature type="transmembrane region" description="Helical; Name=2" evidence="3">
    <location>
        <begin position="73"/>
        <end position="93"/>
    </location>
</feature>
<feature type="transmembrane region" description="Helical; Name=3" evidence="3">
    <location>
        <begin position="122"/>
        <end position="142"/>
    </location>
</feature>
<feature type="transmembrane region" description="Helical; Name=4" evidence="3">
    <location>
        <begin position="167"/>
        <end position="187"/>
    </location>
</feature>
<feature type="transmembrane region" description="Helical; Name=5" evidence="3">
    <location>
        <begin position="196"/>
        <end position="216"/>
    </location>
</feature>
<feature type="transmembrane region" description="Helical; Name=6" evidence="3">
    <location>
        <begin position="239"/>
        <end position="259"/>
    </location>
</feature>
<feature type="short sequence motif" description="NPA 1">
    <location>
        <begin position="102"/>
        <end position="104"/>
    </location>
</feature>
<feature type="short sequence motif" description="NPA 2">
    <location>
        <begin position="221"/>
        <end position="223"/>
    </location>
</feature>
<feature type="modified residue" description="N-acetylmethionine" evidence="2">
    <location>
        <position position="1"/>
    </location>
</feature>